<feature type="chain" id="PRO_0000455233" description="Pycsar effector protein BcPycTIR">
    <location>
        <begin position="1"/>
        <end position="303"/>
    </location>
</feature>
<feature type="region of interest" description="TIR-like" evidence="6">
    <location>
        <begin position="154"/>
        <end position="273"/>
    </location>
</feature>
<feature type="binding site" evidence="1">
    <location>
        <begin position="22"/>
        <end position="138"/>
    </location>
    <ligand>
        <name>a nucleoside 3',5'-cyclic phosphate</name>
        <dbReference type="ChEBI" id="CHEBI:58464"/>
    </ligand>
</feature>
<reference key="1">
    <citation type="submission" date="2015-05" db="EMBL/GenBank/DDBJ databases">
        <title>Draft genome of Burkholderia cepacia LK29.</title>
        <authorList>
            <person name="Chan X.Y."/>
        </authorList>
    </citation>
    <scope>NUCLEOTIDE SEQUENCE [LARGE SCALE GENOMIC DNA]</scope>
    <source>
        <strain>LK29</strain>
    </source>
</reference>
<reference key="2">
    <citation type="journal article" date="2021" name="Cell">
        <title>Cyclic CMP and cyclic UMP mediate bacterial immunity against phages.</title>
        <authorList>
            <person name="Tal N."/>
            <person name="Morehouse B.R."/>
            <person name="Millman A."/>
            <person name="Stokar-Avihail A."/>
            <person name="Avraham C."/>
            <person name="Fedorenko T."/>
            <person name="Yirmiya E."/>
            <person name="Herbst E."/>
            <person name="Brandis A."/>
            <person name="Mehlman T."/>
            <person name="Oppenheimer-Shaanan Y."/>
            <person name="Keszei A.F.A."/>
            <person name="Shao S."/>
            <person name="Amitai G."/>
            <person name="Kranzusch P.J."/>
            <person name="Sorek R."/>
        </authorList>
    </citation>
    <scope>FUNCTION AS AN NAD HYDROLASE</scope>
    <scope>CATALYTIC ACTIVITY</scope>
    <scope>ACTIVITY REGULATION</scope>
    <scope>SUBUNIT</scope>
    <scope>SUBCELLULAR LOCATION</scope>
    <scope>CLASSIFICATION</scope>
    <source>
        <strain>LK29</strain>
    </source>
</reference>
<comment type="function">
    <text evidence="6">Pycsar (pyrimidine cyclase system for antiphage resistance) provides immunity against bacteriophage. The pyrimidine cyclase (PycC) synthesizes cyclic nucleotides in response to infection; these serve as specific second messenger signals. The signals activate the adjacent effector, leading to bacterial cell death and abortive phage infection. A clade B Pycsar system.</text>
</comment>
<comment type="function">
    <text evidence="6">The effector protein of a two-gene Pycsar system. Upon activation by cyclic UMP (cUMP) degrades cellular NAD(+). Expression of this and adjacent uridylate cyclase BcPycC (AC A0A0J5ZXG5) probably confers resistance to bacteriophage. The genes are probably only expressed in response to bacteriophage infection. This protein probably only responds to cUMP (produced by its cognate NTP cyclase).</text>
</comment>
<comment type="catalytic activity">
    <reaction evidence="2">
        <text>NAD(+) + H2O = ADP-D-ribose + nicotinamide + H(+)</text>
        <dbReference type="Rhea" id="RHEA:16301"/>
        <dbReference type="ChEBI" id="CHEBI:15377"/>
        <dbReference type="ChEBI" id="CHEBI:15378"/>
        <dbReference type="ChEBI" id="CHEBI:17154"/>
        <dbReference type="ChEBI" id="CHEBI:57540"/>
        <dbReference type="ChEBI" id="CHEBI:57967"/>
        <dbReference type="EC" id="3.2.2.5"/>
    </reaction>
</comment>
<comment type="activity regulation">
    <text evidence="2">Activated by cyclic UMP (cUMP) and to a lesser extent by cCMP.</text>
</comment>
<comment type="subunit">
    <text evidence="2">Purified protein forms large 2-dimensional sheets when incubated with cUMP and shorter filaments in the presence of cCMP.</text>
</comment>
<comment type="subcellular location">
    <subcellularLocation>
        <location evidence="6">Cytoplasm</location>
    </subcellularLocation>
</comment>
<comment type="domain">
    <text evidence="5">Has an N-terminal cyclic nucleotide-binding domain and a C-terminal Toll/interleukin-1 receptor-like domain (TIR) that probably has the NAD(+) hydrolase activity.</text>
</comment>
<dbReference type="EC" id="3.2.2.5" evidence="2"/>
<dbReference type="EMBL" id="LDWR01000021">
    <property type="protein sequence ID" value="KML58094.1"/>
    <property type="molecule type" value="Genomic_DNA"/>
</dbReference>
<dbReference type="RefSeq" id="WP_048245918.1">
    <property type="nucleotide sequence ID" value="NZ_LDWR01000021.1"/>
</dbReference>
<dbReference type="SMR" id="A0A0J5WTU0"/>
<dbReference type="PATRIC" id="fig|292.27.peg.2411"/>
<dbReference type="Proteomes" id="UP000036338">
    <property type="component" value="Unassembled WGS sequence"/>
</dbReference>
<dbReference type="GO" id="GO:0005737">
    <property type="term" value="C:cytoplasm"/>
    <property type="evidence" value="ECO:0007669"/>
    <property type="project" value="UniProtKB-SubCell"/>
</dbReference>
<dbReference type="GO" id="GO:0050135">
    <property type="term" value="F:NADP+ nucleosidase activity"/>
    <property type="evidence" value="ECO:0007669"/>
    <property type="project" value="InterPro"/>
</dbReference>
<dbReference type="GO" id="GO:0000166">
    <property type="term" value="F:nucleotide binding"/>
    <property type="evidence" value="ECO:0007669"/>
    <property type="project" value="UniProtKB-KW"/>
</dbReference>
<dbReference type="GO" id="GO:0051607">
    <property type="term" value="P:defense response to virus"/>
    <property type="evidence" value="ECO:0007669"/>
    <property type="project" value="UniProtKB-KW"/>
</dbReference>
<dbReference type="CDD" id="cd00038">
    <property type="entry name" value="CAP_ED"/>
    <property type="match status" value="1"/>
</dbReference>
<dbReference type="Gene3D" id="2.60.120.10">
    <property type="entry name" value="Jelly Rolls"/>
    <property type="match status" value="1"/>
</dbReference>
<dbReference type="InterPro" id="IPR019302">
    <property type="entry name" value="CAP12/PCTIR_TIR_dom"/>
</dbReference>
<dbReference type="InterPro" id="IPR000595">
    <property type="entry name" value="cNMP-bd_dom"/>
</dbReference>
<dbReference type="InterPro" id="IPR018490">
    <property type="entry name" value="cNMP-bd_dom_sf"/>
</dbReference>
<dbReference type="InterPro" id="IPR014710">
    <property type="entry name" value="RmlC-like_jellyroll"/>
</dbReference>
<dbReference type="Pfam" id="PF10137">
    <property type="entry name" value="CAP12-PCTIR_TIR"/>
    <property type="match status" value="1"/>
</dbReference>
<dbReference type="Pfam" id="PF00027">
    <property type="entry name" value="cNMP_binding"/>
    <property type="match status" value="1"/>
</dbReference>
<dbReference type="SMART" id="SM00100">
    <property type="entry name" value="cNMP"/>
    <property type="match status" value="1"/>
</dbReference>
<dbReference type="SUPFAM" id="SSF51206">
    <property type="entry name" value="cAMP-binding domain-like"/>
    <property type="match status" value="1"/>
</dbReference>
<dbReference type="PROSITE" id="PS50042">
    <property type="entry name" value="CNMP_BINDING_3"/>
    <property type="match status" value="1"/>
</dbReference>
<keyword id="KW-0051">Antiviral defense</keyword>
<keyword id="KW-0963">Cytoplasm</keyword>
<keyword id="KW-0378">Hydrolase</keyword>
<keyword id="KW-0547">Nucleotide-binding</keyword>
<name>PCTIR_BURCE</name>
<accession>A0A0J5WTU0</accession>
<proteinExistence type="evidence at protein level"/>
<gene>
    <name evidence="3" type="primary">pycTIR</name>
    <name evidence="4" type="ORF">VL15_12780</name>
</gene>
<organism>
    <name type="scientific">Burkholderia cepacia</name>
    <name type="common">Pseudomonas cepacia</name>
    <dbReference type="NCBI Taxonomy" id="292"/>
    <lineage>
        <taxon>Bacteria</taxon>
        <taxon>Pseudomonadati</taxon>
        <taxon>Pseudomonadota</taxon>
        <taxon>Betaproteobacteria</taxon>
        <taxon>Burkholderiales</taxon>
        <taxon>Burkholderiaceae</taxon>
        <taxon>Burkholderia</taxon>
        <taxon>Burkholderia cepacia complex</taxon>
    </lineage>
</organism>
<protein>
    <recommendedName>
        <fullName>Pycsar effector protein BcPycTIR</fullName>
        <shortName evidence="3">BcPycTIR</shortName>
        <ecNumber evidence="2">3.2.2.5</ecNumber>
    </recommendedName>
</protein>
<sequence>MIERFSGEAGKRLRVEALTGQKLVGGDKGLAAELADMAELISVKAGDVIIQQDGTDNDLYFIITGAFDIVVNATPIRRRFPGDSVGEMAAVEPVQKRSATVSAAADSLVAKITEQQLSELGSRYPDIWRRMAKELSKRLIERNQFVNAKREKIRVFVISSAEALGVAHLLQSMFAHDKFLTVPWNQGVFKVANYTLDDIERELDQCDFAVAIAHGDDVTNARGTEWPAPRDNVVFELGLFMGRLGRKRAILMEPRGEGVKLPSDMAGVTTIPYVYDEKNDTEAKFGPAATALRKHIMSLGTIS</sequence>
<evidence type="ECO:0000255" key="1">
    <source>
        <dbReference type="PROSITE-ProRule" id="PRU00060"/>
    </source>
</evidence>
<evidence type="ECO:0000269" key="2">
    <source>
    </source>
</evidence>
<evidence type="ECO:0000303" key="3">
    <source>
    </source>
</evidence>
<evidence type="ECO:0000303" key="4">
    <source ref="1"/>
</evidence>
<evidence type="ECO:0000305" key="5"/>
<evidence type="ECO:0000305" key="6">
    <source>
    </source>
</evidence>